<reference key="1">
    <citation type="journal article" date="2009" name="Infect. Immun.">
        <title>Comparative genomics reveal extensive transposon-mediated genomic plasticity and diversity among potential effector proteins within the genus Coxiella.</title>
        <authorList>
            <person name="Beare P.A."/>
            <person name="Unsworth N."/>
            <person name="Andoh M."/>
            <person name="Voth D.E."/>
            <person name="Omsland A."/>
            <person name="Gilk S.D."/>
            <person name="Williams K.P."/>
            <person name="Sobral B.W."/>
            <person name="Kupko J.J. III"/>
            <person name="Porcella S.F."/>
            <person name="Samuel J.E."/>
            <person name="Heinzen R.A."/>
        </authorList>
    </citation>
    <scope>NUCLEOTIDE SEQUENCE [LARGE SCALE GENOMIC DNA]</scope>
    <source>
        <strain>CbuG_Q212</strain>
    </source>
</reference>
<feature type="chain" id="PRO_1000195609" description="Large ribosomal subunit protein uL11">
    <location>
        <begin position="1"/>
        <end position="145"/>
    </location>
</feature>
<keyword id="KW-0488">Methylation</keyword>
<keyword id="KW-0687">Ribonucleoprotein</keyword>
<keyword id="KW-0689">Ribosomal protein</keyword>
<keyword id="KW-0694">RNA-binding</keyword>
<keyword id="KW-0699">rRNA-binding</keyword>
<dbReference type="EMBL" id="CP001019">
    <property type="protein sequence ID" value="ACJ19053.1"/>
    <property type="molecule type" value="Genomic_DNA"/>
</dbReference>
<dbReference type="RefSeq" id="WP_005771614.1">
    <property type="nucleotide sequence ID" value="NC_011527.1"/>
</dbReference>
<dbReference type="SMR" id="B6J275"/>
<dbReference type="KEGG" id="cbg:CbuG_1779"/>
<dbReference type="HOGENOM" id="CLU_074237_2_0_6"/>
<dbReference type="GO" id="GO:0022625">
    <property type="term" value="C:cytosolic large ribosomal subunit"/>
    <property type="evidence" value="ECO:0007669"/>
    <property type="project" value="TreeGrafter"/>
</dbReference>
<dbReference type="GO" id="GO:0070180">
    <property type="term" value="F:large ribosomal subunit rRNA binding"/>
    <property type="evidence" value="ECO:0007669"/>
    <property type="project" value="UniProtKB-UniRule"/>
</dbReference>
<dbReference type="GO" id="GO:0003735">
    <property type="term" value="F:structural constituent of ribosome"/>
    <property type="evidence" value="ECO:0007669"/>
    <property type="project" value="InterPro"/>
</dbReference>
<dbReference type="GO" id="GO:0006412">
    <property type="term" value="P:translation"/>
    <property type="evidence" value="ECO:0007669"/>
    <property type="project" value="UniProtKB-UniRule"/>
</dbReference>
<dbReference type="CDD" id="cd00349">
    <property type="entry name" value="Ribosomal_L11"/>
    <property type="match status" value="1"/>
</dbReference>
<dbReference type="FunFam" id="1.10.10.250:FF:000001">
    <property type="entry name" value="50S ribosomal protein L11"/>
    <property type="match status" value="1"/>
</dbReference>
<dbReference type="FunFam" id="3.30.1550.10:FF:000013">
    <property type="entry name" value="50S ribosomal protein L11"/>
    <property type="match status" value="1"/>
</dbReference>
<dbReference type="Gene3D" id="1.10.10.250">
    <property type="entry name" value="Ribosomal protein L11, C-terminal domain"/>
    <property type="match status" value="1"/>
</dbReference>
<dbReference type="Gene3D" id="3.30.1550.10">
    <property type="entry name" value="Ribosomal protein L11/L12, N-terminal domain"/>
    <property type="match status" value="1"/>
</dbReference>
<dbReference type="HAMAP" id="MF_00736">
    <property type="entry name" value="Ribosomal_uL11"/>
    <property type="match status" value="1"/>
</dbReference>
<dbReference type="InterPro" id="IPR000911">
    <property type="entry name" value="Ribosomal_uL11"/>
</dbReference>
<dbReference type="InterPro" id="IPR006519">
    <property type="entry name" value="Ribosomal_uL11_bac-typ"/>
</dbReference>
<dbReference type="InterPro" id="IPR020783">
    <property type="entry name" value="Ribosomal_uL11_C"/>
</dbReference>
<dbReference type="InterPro" id="IPR036769">
    <property type="entry name" value="Ribosomal_uL11_C_sf"/>
</dbReference>
<dbReference type="InterPro" id="IPR020785">
    <property type="entry name" value="Ribosomal_uL11_CS"/>
</dbReference>
<dbReference type="InterPro" id="IPR020784">
    <property type="entry name" value="Ribosomal_uL11_N"/>
</dbReference>
<dbReference type="InterPro" id="IPR036796">
    <property type="entry name" value="Ribosomal_uL11_N_sf"/>
</dbReference>
<dbReference type="NCBIfam" id="TIGR01632">
    <property type="entry name" value="L11_bact"/>
    <property type="match status" value="1"/>
</dbReference>
<dbReference type="PANTHER" id="PTHR11661">
    <property type="entry name" value="60S RIBOSOMAL PROTEIN L12"/>
    <property type="match status" value="1"/>
</dbReference>
<dbReference type="PANTHER" id="PTHR11661:SF1">
    <property type="entry name" value="LARGE RIBOSOMAL SUBUNIT PROTEIN UL11M"/>
    <property type="match status" value="1"/>
</dbReference>
<dbReference type="Pfam" id="PF00298">
    <property type="entry name" value="Ribosomal_L11"/>
    <property type="match status" value="1"/>
</dbReference>
<dbReference type="Pfam" id="PF03946">
    <property type="entry name" value="Ribosomal_L11_N"/>
    <property type="match status" value="1"/>
</dbReference>
<dbReference type="SMART" id="SM00649">
    <property type="entry name" value="RL11"/>
    <property type="match status" value="1"/>
</dbReference>
<dbReference type="SUPFAM" id="SSF54747">
    <property type="entry name" value="Ribosomal L11/L12e N-terminal domain"/>
    <property type="match status" value="1"/>
</dbReference>
<dbReference type="SUPFAM" id="SSF46906">
    <property type="entry name" value="Ribosomal protein L11, C-terminal domain"/>
    <property type="match status" value="1"/>
</dbReference>
<dbReference type="PROSITE" id="PS00359">
    <property type="entry name" value="RIBOSOMAL_L11"/>
    <property type="match status" value="1"/>
</dbReference>
<sequence length="145" mass="15523">MAKKITGYIRLQIKAGEANPSPPVGPALGQHGVNIREFCESFNTATKNIEKGLPTPVIITVYADRTFSFITKTPPASVLLKKFVLKGKSGSARPNTEKVGKATRQQLEEIAKMKTPDLTAADLEAAIRTIAGTARSMGIDVEGVE</sequence>
<comment type="function">
    <text evidence="1">Forms part of the ribosomal stalk which helps the ribosome interact with GTP-bound translation factors.</text>
</comment>
<comment type="subunit">
    <text evidence="1">Part of the ribosomal stalk of the 50S ribosomal subunit. Interacts with L10 and the large rRNA to form the base of the stalk. L10 forms an elongated spine to which L12 dimers bind in a sequential fashion forming a multimeric L10(L12)X complex.</text>
</comment>
<comment type="PTM">
    <text evidence="1">One or more lysine residues are methylated.</text>
</comment>
<comment type="similarity">
    <text evidence="1">Belongs to the universal ribosomal protein uL11 family.</text>
</comment>
<proteinExistence type="inferred from homology"/>
<accession>B6J275</accession>
<gene>
    <name evidence="1" type="primary">rplK</name>
    <name type="ordered locus">CbuG_1779</name>
</gene>
<organism>
    <name type="scientific">Coxiella burnetii (strain CbuG_Q212)</name>
    <name type="common">Coxiella burnetii (strain Q212)</name>
    <dbReference type="NCBI Taxonomy" id="434923"/>
    <lineage>
        <taxon>Bacteria</taxon>
        <taxon>Pseudomonadati</taxon>
        <taxon>Pseudomonadota</taxon>
        <taxon>Gammaproteobacteria</taxon>
        <taxon>Legionellales</taxon>
        <taxon>Coxiellaceae</taxon>
        <taxon>Coxiella</taxon>
    </lineage>
</organism>
<evidence type="ECO:0000255" key="1">
    <source>
        <dbReference type="HAMAP-Rule" id="MF_00736"/>
    </source>
</evidence>
<evidence type="ECO:0000305" key="2"/>
<name>RL11_COXB2</name>
<protein>
    <recommendedName>
        <fullName evidence="1">Large ribosomal subunit protein uL11</fullName>
    </recommendedName>
    <alternativeName>
        <fullName evidence="2">50S ribosomal protein L11</fullName>
    </alternativeName>
</protein>